<proteinExistence type="inferred from homology"/>
<comment type="function">
    <text evidence="1">Specifically catalyzes the cleavage of the D-lactyl ether substituent of MurNAc 6-phosphate, producing GlcNAc 6-phosphate and D-lactate. Together with AnmK, is also required for the utilization of anhydro-N-acetylmuramic acid (anhMurNAc) either imported from the medium or derived from its own cell wall murein, and thus plays a role in cell wall recycling.</text>
</comment>
<comment type="catalytic activity">
    <reaction evidence="1">
        <text>N-acetyl-D-muramate 6-phosphate + H2O = N-acetyl-D-glucosamine 6-phosphate + (R)-lactate</text>
        <dbReference type="Rhea" id="RHEA:26410"/>
        <dbReference type="ChEBI" id="CHEBI:15377"/>
        <dbReference type="ChEBI" id="CHEBI:16004"/>
        <dbReference type="ChEBI" id="CHEBI:57513"/>
        <dbReference type="ChEBI" id="CHEBI:58722"/>
        <dbReference type="EC" id="4.2.1.126"/>
    </reaction>
</comment>
<comment type="pathway">
    <text evidence="1">Amino-sugar metabolism; 1,6-anhydro-N-acetylmuramate degradation.</text>
</comment>
<comment type="pathway">
    <text evidence="1">Amino-sugar metabolism; N-acetylmuramate degradation.</text>
</comment>
<comment type="pathway">
    <text evidence="1">Cell wall biogenesis; peptidoglycan recycling.</text>
</comment>
<comment type="subunit">
    <text evidence="1">Homodimer.</text>
</comment>
<comment type="miscellaneous">
    <text evidence="1">A lyase-type mechanism (elimination/hydration) is suggested for the cleavage of the lactyl ether bond of MurNAc 6-phosphate, with the formation of an alpha,beta-unsaturated aldehyde intermediate with (E)-stereochemistry, followed by the syn addition of water to give product.</text>
</comment>
<comment type="similarity">
    <text evidence="1">Belongs to the GCKR-like family. MurNAc-6-P etherase subfamily.</text>
</comment>
<evidence type="ECO:0000255" key="1">
    <source>
        <dbReference type="HAMAP-Rule" id="MF_00068"/>
    </source>
</evidence>
<reference key="1">
    <citation type="submission" date="2006-03" db="EMBL/GenBank/DDBJ databases">
        <title>Complete genome sequence of Francisella tularensis LVS (Live Vaccine Strain).</title>
        <authorList>
            <person name="Chain P."/>
            <person name="Larimer F."/>
            <person name="Land M."/>
            <person name="Stilwagen S."/>
            <person name="Larsson P."/>
            <person name="Bearden S."/>
            <person name="Chu M."/>
            <person name="Oyston P."/>
            <person name="Forsman M."/>
            <person name="Andersson S."/>
            <person name="Lindler L."/>
            <person name="Titball R."/>
            <person name="Garcia E."/>
        </authorList>
    </citation>
    <scope>NUCLEOTIDE SEQUENCE [LARGE SCALE GENOMIC DNA]</scope>
    <source>
        <strain>LVS</strain>
    </source>
</reference>
<organism>
    <name type="scientific">Francisella tularensis subsp. holarctica (strain LVS)</name>
    <dbReference type="NCBI Taxonomy" id="376619"/>
    <lineage>
        <taxon>Bacteria</taxon>
        <taxon>Pseudomonadati</taxon>
        <taxon>Pseudomonadota</taxon>
        <taxon>Gammaproteobacteria</taxon>
        <taxon>Thiotrichales</taxon>
        <taxon>Francisellaceae</taxon>
        <taxon>Francisella</taxon>
    </lineage>
</organism>
<protein>
    <recommendedName>
        <fullName evidence="1">N-acetylmuramic acid 6-phosphate etherase</fullName>
        <shortName evidence="1">MurNAc-6-P etherase</shortName>
        <ecNumber evidence="1">4.2.1.126</ecNumber>
    </recommendedName>
    <alternativeName>
        <fullName evidence="1">N-acetylmuramic acid 6-phosphate hydrolase</fullName>
    </alternativeName>
    <alternativeName>
        <fullName evidence="1">N-acetylmuramic acid 6-phosphate lyase</fullName>
    </alternativeName>
</protein>
<keyword id="KW-0119">Carbohydrate metabolism</keyword>
<keyword id="KW-0456">Lyase</keyword>
<keyword id="KW-1185">Reference proteome</keyword>
<gene>
    <name evidence="1" type="primary">murQ</name>
    <name type="ordered locus">FTL_0299</name>
</gene>
<name>MURQ_FRATH</name>
<feature type="chain" id="PRO_0000249625" description="N-acetylmuramic acid 6-phosphate etherase">
    <location>
        <begin position="1"/>
        <end position="294"/>
    </location>
</feature>
<feature type="domain" description="SIS" evidence="1">
    <location>
        <begin position="56"/>
        <end position="219"/>
    </location>
</feature>
<feature type="active site" description="Proton donor" evidence="1">
    <location>
        <position position="84"/>
    </location>
</feature>
<feature type="active site" evidence="1">
    <location>
        <position position="115"/>
    </location>
</feature>
<dbReference type="EC" id="4.2.1.126" evidence="1"/>
<dbReference type="EMBL" id="AM233362">
    <property type="protein sequence ID" value="CAJ78740.1"/>
    <property type="molecule type" value="Genomic_DNA"/>
</dbReference>
<dbReference type="RefSeq" id="WP_003014464.1">
    <property type="nucleotide sequence ID" value="NZ_CP009694.1"/>
</dbReference>
<dbReference type="SMR" id="Q2A5B0"/>
<dbReference type="KEGG" id="ftl:FTL_0299"/>
<dbReference type="UniPathway" id="UPA00342"/>
<dbReference type="UniPathway" id="UPA00343"/>
<dbReference type="UniPathway" id="UPA00544"/>
<dbReference type="Proteomes" id="UP000001944">
    <property type="component" value="Chromosome"/>
</dbReference>
<dbReference type="GO" id="GO:0097367">
    <property type="term" value="F:carbohydrate derivative binding"/>
    <property type="evidence" value="ECO:0007669"/>
    <property type="project" value="InterPro"/>
</dbReference>
<dbReference type="GO" id="GO:0016835">
    <property type="term" value="F:carbon-oxygen lyase activity"/>
    <property type="evidence" value="ECO:0007669"/>
    <property type="project" value="UniProtKB-UniRule"/>
</dbReference>
<dbReference type="GO" id="GO:0016803">
    <property type="term" value="F:ether hydrolase activity"/>
    <property type="evidence" value="ECO:0007669"/>
    <property type="project" value="TreeGrafter"/>
</dbReference>
<dbReference type="GO" id="GO:0097175">
    <property type="term" value="P:1,6-anhydro-N-acetyl-beta-muramic acid catabolic process"/>
    <property type="evidence" value="ECO:0007669"/>
    <property type="project" value="UniProtKB-UniRule"/>
</dbReference>
<dbReference type="GO" id="GO:0046348">
    <property type="term" value="P:amino sugar catabolic process"/>
    <property type="evidence" value="ECO:0007669"/>
    <property type="project" value="InterPro"/>
</dbReference>
<dbReference type="GO" id="GO:0097173">
    <property type="term" value="P:N-acetylmuramic acid catabolic process"/>
    <property type="evidence" value="ECO:0007669"/>
    <property type="project" value="UniProtKB-UniPathway"/>
</dbReference>
<dbReference type="GO" id="GO:0009254">
    <property type="term" value="P:peptidoglycan turnover"/>
    <property type="evidence" value="ECO:0007669"/>
    <property type="project" value="UniProtKB-UniRule"/>
</dbReference>
<dbReference type="CDD" id="cd05007">
    <property type="entry name" value="SIS_Etherase"/>
    <property type="match status" value="1"/>
</dbReference>
<dbReference type="FunFam" id="1.10.8.1080:FF:000001">
    <property type="entry name" value="N-acetylmuramic acid 6-phosphate etherase"/>
    <property type="match status" value="1"/>
</dbReference>
<dbReference type="FunFam" id="3.40.50.10490:FF:000014">
    <property type="entry name" value="N-acetylmuramic acid 6-phosphate etherase"/>
    <property type="match status" value="1"/>
</dbReference>
<dbReference type="Gene3D" id="1.10.8.1080">
    <property type="match status" value="1"/>
</dbReference>
<dbReference type="Gene3D" id="3.40.50.10490">
    <property type="entry name" value="Glucose-6-phosphate isomerase like protein, domain 1"/>
    <property type="match status" value="1"/>
</dbReference>
<dbReference type="HAMAP" id="MF_00068">
    <property type="entry name" value="MurQ"/>
    <property type="match status" value="1"/>
</dbReference>
<dbReference type="InterPro" id="IPR005488">
    <property type="entry name" value="Etherase_MurQ"/>
</dbReference>
<dbReference type="InterPro" id="IPR005486">
    <property type="entry name" value="Glucokinase_regulatory_CS"/>
</dbReference>
<dbReference type="InterPro" id="IPR040190">
    <property type="entry name" value="MURQ/GCKR"/>
</dbReference>
<dbReference type="InterPro" id="IPR001347">
    <property type="entry name" value="SIS_dom"/>
</dbReference>
<dbReference type="InterPro" id="IPR046348">
    <property type="entry name" value="SIS_dom_sf"/>
</dbReference>
<dbReference type="NCBIfam" id="TIGR00274">
    <property type="entry name" value="N-acetylmuramic acid 6-phosphate etherase"/>
    <property type="match status" value="1"/>
</dbReference>
<dbReference type="NCBIfam" id="NF003915">
    <property type="entry name" value="PRK05441.1"/>
    <property type="match status" value="1"/>
</dbReference>
<dbReference type="NCBIfam" id="NF009222">
    <property type="entry name" value="PRK12570.1"/>
    <property type="match status" value="1"/>
</dbReference>
<dbReference type="PANTHER" id="PTHR10088">
    <property type="entry name" value="GLUCOKINASE REGULATORY PROTEIN"/>
    <property type="match status" value="1"/>
</dbReference>
<dbReference type="PANTHER" id="PTHR10088:SF4">
    <property type="entry name" value="GLUCOKINASE REGULATORY PROTEIN"/>
    <property type="match status" value="1"/>
</dbReference>
<dbReference type="Pfam" id="PF22645">
    <property type="entry name" value="GKRP_SIS_N"/>
    <property type="match status" value="1"/>
</dbReference>
<dbReference type="SUPFAM" id="SSF53697">
    <property type="entry name" value="SIS domain"/>
    <property type="match status" value="1"/>
</dbReference>
<dbReference type="PROSITE" id="PS01272">
    <property type="entry name" value="GCKR"/>
    <property type="match status" value="1"/>
</dbReference>
<dbReference type="PROSITE" id="PS51464">
    <property type="entry name" value="SIS"/>
    <property type="match status" value="1"/>
</dbReference>
<sequence>MNILENINTEKRNPRSLNLDSMSIAEAVSLMIDEEYGVIEALKEQHRNITEVILATSYSLRNGGRIIYIGAGTSGRLGILDAVECPPTFSVDYNTIVGLIAGGEKAFIQAQEGAEDAANFGKEDLQSINLTAKDIVIGIAASGRTPYVIGALEYANSIGATTVAISCTKQAKISKYAKYSIEAVPGPEVLTGSTRLKAGTTQKLILNMISTLSMVSVGKVYQNLMVDVKPTNQKLIERSKNIICEVTGVDYTTAEKFYLKANKSVKVAIVMILNNCDYEKALAILKNNNNFIKS</sequence>
<accession>Q2A5B0</accession>